<sequence>MELTTRTIAARKHIALVSHDHCKKSLLAWVMENRDLLAQHELYATGTTGNLVQKATGIDVHCLLSGPMGGDQEVGALISEKKIDILIFFWDPLNAVPHDPDVKALLRLATVWNIPVATNRSTADFLIGSTLFSSEVTIAIPDYDRYMQQRLDLK</sequence>
<feature type="chain" id="PRO_1000017836" description="Methylglyoxal synthase">
    <location>
        <begin position="1"/>
        <end position="154"/>
    </location>
</feature>
<feature type="domain" description="MGS-like" evidence="1">
    <location>
        <begin position="1"/>
        <end position="154"/>
    </location>
</feature>
<feature type="active site" description="Proton donor/acceptor" evidence="1">
    <location>
        <position position="71"/>
    </location>
</feature>
<feature type="binding site" evidence="1">
    <location>
        <position position="19"/>
    </location>
    <ligand>
        <name>substrate</name>
    </ligand>
</feature>
<feature type="binding site" evidence="1">
    <location>
        <position position="23"/>
    </location>
    <ligand>
        <name>substrate</name>
    </ligand>
</feature>
<feature type="binding site" evidence="1">
    <location>
        <begin position="45"/>
        <end position="48"/>
    </location>
    <ligand>
        <name>substrate</name>
    </ligand>
</feature>
<feature type="binding site" evidence="1">
    <location>
        <begin position="65"/>
        <end position="66"/>
    </location>
    <ligand>
        <name>substrate</name>
    </ligand>
</feature>
<feature type="binding site" evidence="1">
    <location>
        <position position="98"/>
    </location>
    <ligand>
        <name>substrate</name>
    </ligand>
</feature>
<name>MGSA_YERPP</name>
<organism>
    <name type="scientific">Yersinia pestis (strain Pestoides F)</name>
    <dbReference type="NCBI Taxonomy" id="386656"/>
    <lineage>
        <taxon>Bacteria</taxon>
        <taxon>Pseudomonadati</taxon>
        <taxon>Pseudomonadota</taxon>
        <taxon>Gammaproteobacteria</taxon>
        <taxon>Enterobacterales</taxon>
        <taxon>Yersiniaceae</taxon>
        <taxon>Yersinia</taxon>
    </lineage>
</organism>
<accession>A4TKV8</accession>
<dbReference type="EC" id="4.2.3.3" evidence="1"/>
<dbReference type="EMBL" id="CP000668">
    <property type="protein sequence ID" value="ABP39920.1"/>
    <property type="molecule type" value="Genomic_DNA"/>
</dbReference>
<dbReference type="RefSeq" id="WP_002213060.1">
    <property type="nucleotide sequence ID" value="NZ_CP009715.1"/>
</dbReference>
<dbReference type="SMR" id="A4TKV8"/>
<dbReference type="KEGG" id="ypp:YPDSF_1533"/>
<dbReference type="PATRIC" id="fig|386656.14.peg.2239"/>
<dbReference type="GO" id="GO:0005829">
    <property type="term" value="C:cytosol"/>
    <property type="evidence" value="ECO:0007669"/>
    <property type="project" value="TreeGrafter"/>
</dbReference>
<dbReference type="GO" id="GO:0008929">
    <property type="term" value="F:methylglyoxal synthase activity"/>
    <property type="evidence" value="ECO:0007669"/>
    <property type="project" value="UniProtKB-UniRule"/>
</dbReference>
<dbReference type="GO" id="GO:0019242">
    <property type="term" value="P:methylglyoxal biosynthetic process"/>
    <property type="evidence" value="ECO:0007669"/>
    <property type="project" value="UniProtKB-UniRule"/>
</dbReference>
<dbReference type="CDD" id="cd01422">
    <property type="entry name" value="MGS"/>
    <property type="match status" value="1"/>
</dbReference>
<dbReference type="FunFam" id="3.40.50.1380:FF:000002">
    <property type="entry name" value="Methylglyoxal synthase"/>
    <property type="match status" value="1"/>
</dbReference>
<dbReference type="Gene3D" id="3.40.50.1380">
    <property type="entry name" value="Methylglyoxal synthase-like domain"/>
    <property type="match status" value="1"/>
</dbReference>
<dbReference type="HAMAP" id="MF_00549">
    <property type="entry name" value="Methylglyoxal_synth"/>
    <property type="match status" value="1"/>
</dbReference>
<dbReference type="InterPro" id="IPR004363">
    <property type="entry name" value="Methylgl_synth"/>
</dbReference>
<dbReference type="InterPro" id="IPR018148">
    <property type="entry name" value="Methylglyoxal_synth_AS"/>
</dbReference>
<dbReference type="InterPro" id="IPR011607">
    <property type="entry name" value="MGS-like_dom"/>
</dbReference>
<dbReference type="InterPro" id="IPR036914">
    <property type="entry name" value="MGS-like_dom_sf"/>
</dbReference>
<dbReference type="NCBIfam" id="TIGR00160">
    <property type="entry name" value="MGSA"/>
    <property type="match status" value="1"/>
</dbReference>
<dbReference type="NCBIfam" id="NF003559">
    <property type="entry name" value="PRK05234.1"/>
    <property type="match status" value="1"/>
</dbReference>
<dbReference type="PANTHER" id="PTHR30492">
    <property type="entry name" value="METHYLGLYOXAL SYNTHASE"/>
    <property type="match status" value="1"/>
</dbReference>
<dbReference type="PANTHER" id="PTHR30492:SF0">
    <property type="entry name" value="METHYLGLYOXAL SYNTHASE"/>
    <property type="match status" value="1"/>
</dbReference>
<dbReference type="Pfam" id="PF02142">
    <property type="entry name" value="MGS"/>
    <property type="match status" value="1"/>
</dbReference>
<dbReference type="PIRSF" id="PIRSF006614">
    <property type="entry name" value="Methylglyox_syn"/>
    <property type="match status" value="1"/>
</dbReference>
<dbReference type="SMART" id="SM00851">
    <property type="entry name" value="MGS"/>
    <property type="match status" value="1"/>
</dbReference>
<dbReference type="SUPFAM" id="SSF52335">
    <property type="entry name" value="Methylglyoxal synthase-like"/>
    <property type="match status" value="1"/>
</dbReference>
<dbReference type="PROSITE" id="PS01335">
    <property type="entry name" value="METHYLGLYOXAL_SYNTH"/>
    <property type="match status" value="1"/>
</dbReference>
<dbReference type="PROSITE" id="PS51855">
    <property type="entry name" value="MGS"/>
    <property type="match status" value="1"/>
</dbReference>
<comment type="function">
    <text evidence="1">Catalyzes the formation of methylglyoxal from dihydroxyacetone phosphate.</text>
</comment>
<comment type="catalytic activity">
    <reaction evidence="1">
        <text>dihydroxyacetone phosphate = methylglyoxal + phosphate</text>
        <dbReference type="Rhea" id="RHEA:17937"/>
        <dbReference type="ChEBI" id="CHEBI:17158"/>
        <dbReference type="ChEBI" id="CHEBI:43474"/>
        <dbReference type="ChEBI" id="CHEBI:57642"/>
        <dbReference type="EC" id="4.2.3.3"/>
    </reaction>
</comment>
<comment type="similarity">
    <text evidence="1">Belongs to the methylglyoxal synthase family.</text>
</comment>
<reference key="1">
    <citation type="submission" date="2007-02" db="EMBL/GenBank/DDBJ databases">
        <title>Complete sequence of chromosome of Yersinia pestis Pestoides F.</title>
        <authorList>
            <consortium name="US DOE Joint Genome Institute"/>
            <person name="Copeland A."/>
            <person name="Lucas S."/>
            <person name="Lapidus A."/>
            <person name="Barry K."/>
            <person name="Detter J.C."/>
            <person name="Glavina del Rio T."/>
            <person name="Hammon N."/>
            <person name="Israni S."/>
            <person name="Dalin E."/>
            <person name="Tice H."/>
            <person name="Pitluck S."/>
            <person name="Di Bartolo G."/>
            <person name="Chain P."/>
            <person name="Malfatti S."/>
            <person name="Shin M."/>
            <person name="Vergez L."/>
            <person name="Schmutz J."/>
            <person name="Larimer F."/>
            <person name="Land M."/>
            <person name="Hauser L."/>
            <person name="Worsham P."/>
            <person name="Chu M."/>
            <person name="Bearden S."/>
            <person name="Garcia E."/>
            <person name="Richardson P."/>
        </authorList>
    </citation>
    <scope>NUCLEOTIDE SEQUENCE [LARGE SCALE GENOMIC DNA]</scope>
    <source>
        <strain>Pestoides F</strain>
    </source>
</reference>
<proteinExistence type="inferred from homology"/>
<evidence type="ECO:0000255" key="1">
    <source>
        <dbReference type="HAMAP-Rule" id="MF_00549"/>
    </source>
</evidence>
<keyword id="KW-0456">Lyase</keyword>
<protein>
    <recommendedName>
        <fullName evidence="1">Methylglyoxal synthase</fullName>
        <shortName evidence="1">MGS</shortName>
        <ecNumber evidence="1">4.2.3.3</ecNumber>
    </recommendedName>
</protein>
<gene>
    <name evidence="1" type="primary">mgsA</name>
    <name type="ordered locus">YPDSF_1533</name>
</gene>